<accession>B5XZ49</accession>
<reference key="1">
    <citation type="journal article" date="2008" name="PLoS Genet.">
        <title>Complete genome sequence of the N2-fixing broad host range endophyte Klebsiella pneumoniae 342 and virulence predictions verified in mice.</title>
        <authorList>
            <person name="Fouts D.E."/>
            <person name="Tyler H.L."/>
            <person name="DeBoy R.T."/>
            <person name="Daugherty S."/>
            <person name="Ren Q."/>
            <person name="Badger J.H."/>
            <person name="Durkin A.S."/>
            <person name="Huot H."/>
            <person name="Shrivastava S."/>
            <person name="Kothari S."/>
            <person name="Dodson R.J."/>
            <person name="Mohamoud Y."/>
            <person name="Khouri H."/>
            <person name="Roesch L.F.W."/>
            <person name="Krogfelt K.A."/>
            <person name="Struve C."/>
            <person name="Triplett E.W."/>
            <person name="Methe B.A."/>
        </authorList>
    </citation>
    <scope>NUCLEOTIDE SEQUENCE [LARGE SCALE GENOMIC DNA]</scope>
    <source>
        <strain>342</strain>
    </source>
</reference>
<organism>
    <name type="scientific">Klebsiella pneumoniae (strain 342)</name>
    <dbReference type="NCBI Taxonomy" id="507522"/>
    <lineage>
        <taxon>Bacteria</taxon>
        <taxon>Pseudomonadati</taxon>
        <taxon>Pseudomonadota</taxon>
        <taxon>Gammaproteobacteria</taxon>
        <taxon>Enterobacterales</taxon>
        <taxon>Enterobacteriaceae</taxon>
        <taxon>Klebsiella/Raoultella group</taxon>
        <taxon>Klebsiella</taxon>
        <taxon>Klebsiella pneumoniae complex</taxon>
    </lineage>
</organism>
<name>RHAS_KLEP3</name>
<gene>
    <name evidence="1" type="primary">rhaS</name>
    <name type="ordered locus">KPK_5465</name>
</gene>
<protein>
    <recommendedName>
        <fullName evidence="1">HTH-type transcriptional activator RhaS</fullName>
    </recommendedName>
    <alternativeName>
        <fullName evidence="1">L-rhamnose operon regulatory protein RhaS</fullName>
    </alternativeName>
</protein>
<sequence length="278" mass="32063">MTILHSTDFFKAGISTVAIEPRLPQSAFPEHHHDFHEIVIVEQGTGIHVFNGQPYTIGGGSVCFIRDHDRHLYEHTDNLCLTNVLYRAPDAFRFLAGVSQLLPQEQEGNYPSHWRVNQTVLQQVRHIVAQMEAMGSETDTHAVASREILFMQLLVLLRKSSLAEEATNNDARLNQLLAWLEDHFAQEICWEEVAAQFSLSLRTLHRQLKQQTGLTPQRYLNRVRLMKARHLLRHSDESVTDIAFRCGFGDSNHFSTLFRREFDWSPRDIRQGRDAILQ</sequence>
<proteinExistence type="inferred from homology"/>
<comment type="function">
    <text evidence="1">Activates expression of the rhaBAD and rhaT operons.</text>
</comment>
<comment type="subunit">
    <text evidence="1">Binds DNA as a dimer.</text>
</comment>
<comment type="subcellular location">
    <subcellularLocation>
        <location evidence="1">Cytoplasm</location>
    </subcellularLocation>
</comment>
<keyword id="KW-0010">Activator</keyword>
<keyword id="KW-0963">Cytoplasm</keyword>
<keyword id="KW-0238">DNA-binding</keyword>
<keyword id="KW-0677">Repeat</keyword>
<keyword id="KW-0684">Rhamnose metabolism</keyword>
<keyword id="KW-0804">Transcription</keyword>
<keyword id="KW-0805">Transcription regulation</keyword>
<evidence type="ECO:0000255" key="1">
    <source>
        <dbReference type="HAMAP-Rule" id="MF_01534"/>
    </source>
</evidence>
<feature type="chain" id="PRO_1000200957" description="HTH-type transcriptional activator RhaS">
    <location>
        <begin position="1"/>
        <end position="278"/>
    </location>
</feature>
<feature type="domain" description="HTH araC/xylS-type" evidence="1">
    <location>
        <begin position="174"/>
        <end position="272"/>
    </location>
</feature>
<feature type="DNA-binding region" description="H-T-H motif" evidence="1">
    <location>
        <begin position="191"/>
        <end position="212"/>
    </location>
</feature>
<feature type="DNA-binding region" description="H-T-H motif" evidence="1">
    <location>
        <begin position="239"/>
        <end position="262"/>
    </location>
</feature>
<feature type="site" description="Interaction with sigma-70" evidence="1">
    <location>
        <position position="241"/>
    </location>
</feature>
<feature type="site" description="Interaction with sigma-70" evidence="1">
    <location>
        <position position="250"/>
    </location>
</feature>
<dbReference type="EMBL" id="CP000964">
    <property type="protein sequence ID" value="ACI10038.1"/>
    <property type="molecule type" value="Genomic_DNA"/>
</dbReference>
<dbReference type="SMR" id="B5XZ49"/>
<dbReference type="KEGG" id="kpe:KPK_5465"/>
<dbReference type="HOGENOM" id="CLU_000445_88_5_6"/>
<dbReference type="Proteomes" id="UP000001734">
    <property type="component" value="Chromosome"/>
</dbReference>
<dbReference type="GO" id="GO:0005737">
    <property type="term" value="C:cytoplasm"/>
    <property type="evidence" value="ECO:0007669"/>
    <property type="project" value="UniProtKB-SubCell"/>
</dbReference>
<dbReference type="GO" id="GO:0003700">
    <property type="term" value="F:DNA-binding transcription factor activity"/>
    <property type="evidence" value="ECO:0007669"/>
    <property type="project" value="UniProtKB-UniRule"/>
</dbReference>
<dbReference type="GO" id="GO:0043565">
    <property type="term" value="F:sequence-specific DNA binding"/>
    <property type="evidence" value="ECO:0007669"/>
    <property type="project" value="InterPro"/>
</dbReference>
<dbReference type="GO" id="GO:0045893">
    <property type="term" value="P:positive regulation of DNA-templated transcription"/>
    <property type="evidence" value="ECO:0007669"/>
    <property type="project" value="UniProtKB-UniRule"/>
</dbReference>
<dbReference type="GO" id="GO:0019299">
    <property type="term" value="P:rhamnose metabolic process"/>
    <property type="evidence" value="ECO:0007669"/>
    <property type="project" value="UniProtKB-UniRule"/>
</dbReference>
<dbReference type="CDD" id="cd06977">
    <property type="entry name" value="cupin_RhaR_RhaS-like_N"/>
    <property type="match status" value="1"/>
</dbReference>
<dbReference type="Gene3D" id="1.10.10.60">
    <property type="entry name" value="Homeodomain-like"/>
    <property type="match status" value="2"/>
</dbReference>
<dbReference type="Gene3D" id="2.60.120.10">
    <property type="entry name" value="Jelly Rolls"/>
    <property type="match status" value="1"/>
</dbReference>
<dbReference type="HAMAP" id="MF_01534">
    <property type="entry name" value="HTH_type_RhaS"/>
    <property type="match status" value="1"/>
</dbReference>
<dbReference type="InterPro" id="IPR003313">
    <property type="entry name" value="AraC-bd"/>
</dbReference>
<dbReference type="InterPro" id="IPR050204">
    <property type="entry name" value="AraC_XylS_family_regulators"/>
</dbReference>
<dbReference type="InterPro" id="IPR009057">
    <property type="entry name" value="Homeodomain-like_sf"/>
</dbReference>
<dbReference type="InterPro" id="IPR037923">
    <property type="entry name" value="HTH-like"/>
</dbReference>
<dbReference type="InterPro" id="IPR018060">
    <property type="entry name" value="HTH_AraC"/>
</dbReference>
<dbReference type="InterPro" id="IPR018062">
    <property type="entry name" value="HTH_AraC-typ_CS"/>
</dbReference>
<dbReference type="InterPro" id="IPR047220">
    <property type="entry name" value="RhaR_RhaS-like_N"/>
</dbReference>
<dbReference type="InterPro" id="IPR014710">
    <property type="entry name" value="RmlC-like_jellyroll"/>
</dbReference>
<dbReference type="InterPro" id="IPR020449">
    <property type="entry name" value="Tscrpt_reg_AraC-type_HTH"/>
</dbReference>
<dbReference type="InterPro" id="IPR023609">
    <property type="entry name" value="Tscrpt_reg_HTH_RhaS"/>
</dbReference>
<dbReference type="NCBIfam" id="NF010028">
    <property type="entry name" value="PRK13503.1"/>
    <property type="match status" value="1"/>
</dbReference>
<dbReference type="PANTHER" id="PTHR46796:SF13">
    <property type="entry name" value="HTH-TYPE TRANSCRIPTIONAL ACTIVATOR RHAS"/>
    <property type="match status" value="1"/>
</dbReference>
<dbReference type="PANTHER" id="PTHR46796">
    <property type="entry name" value="HTH-TYPE TRANSCRIPTIONAL ACTIVATOR RHAS-RELATED"/>
    <property type="match status" value="1"/>
</dbReference>
<dbReference type="Pfam" id="PF02311">
    <property type="entry name" value="AraC_binding"/>
    <property type="match status" value="1"/>
</dbReference>
<dbReference type="Pfam" id="PF12833">
    <property type="entry name" value="HTH_18"/>
    <property type="match status" value="1"/>
</dbReference>
<dbReference type="PRINTS" id="PR00032">
    <property type="entry name" value="HTHARAC"/>
</dbReference>
<dbReference type="SMART" id="SM00342">
    <property type="entry name" value="HTH_ARAC"/>
    <property type="match status" value="1"/>
</dbReference>
<dbReference type="SUPFAM" id="SSF46689">
    <property type="entry name" value="Homeodomain-like"/>
    <property type="match status" value="2"/>
</dbReference>
<dbReference type="SUPFAM" id="SSF51215">
    <property type="entry name" value="Regulatory protein AraC"/>
    <property type="match status" value="1"/>
</dbReference>
<dbReference type="PROSITE" id="PS00041">
    <property type="entry name" value="HTH_ARAC_FAMILY_1"/>
    <property type="match status" value="1"/>
</dbReference>
<dbReference type="PROSITE" id="PS01124">
    <property type="entry name" value="HTH_ARAC_FAMILY_2"/>
    <property type="match status" value="1"/>
</dbReference>